<keyword id="KW-0002">3D-structure</keyword>
<keyword id="KW-0007">Acetylation</keyword>
<keyword id="KW-0158">Chromosome</keyword>
<keyword id="KW-0238">DNA-binding</keyword>
<keyword id="KW-0488">Methylation</keyword>
<keyword id="KW-0544">Nucleosome core</keyword>
<keyword id="KW-0539">Nucleus</keyword>
<keyword id="KW-0597">Phosphoprotein</keyword>
<keyword id="KW-1185">Reference proteome</keyword>
<gene>
    <name type="ORF">OsI_019426</name>
</gene>
<gene>
    <name type="ORF">OsI_021009</name>
</gene>
<gene>
    <name type="ORF">OsI_021012</name>
</gene>
<gene>
    <name type="ORF">OsI_033964</name>
</gene>
<sequence length="136" mass="15268">MARTKQTARKSTGGKAPRKQLATKAARKSAPATGGVKKPHRFRPGTVALREIRKYQKSTELLIRKLPFQRLVREIAQDFKTDLRFQSSAVAALQEAAEAYLVGLFEDTNLCAIHAKRVTIMPKDIQLARRIRGERA</sequence>
<reference key="1">
    <citation type="journal article" date="1987" name="Sci. China, Ser. B, Chem. Life Sci. Earth Sci.">
        <title>Cloning and structure analysis of histone H3 gene and small subunit gene of 1,5-biphosphoric acid ribulose carboxylase rubisco of rice.</title>
        <authorList>
            <person name="Xie Y."/>
            <person name="Cai Y."/>
            <person name="Peng Z."/>
            <person name="Wu R."/>
        </authorList>
    </citation>
    <scope>NUCLEOTIDE SEQUENCE [GENOMIC DNA]</scope>
    <source>
        <strain>cv. IR26</strain>
    </source>
</reference>
<reference key="2">
    <citation type="submission" date="1996-10" db="EMBL/GenBank/DDBJ databases">
        <title>Molecular cloning and characterization of histone gene in rice.</title>
        <authorList>
            <person name="Lee M.C."/>
            <person name="Park J.Y."/>
            <person name="Yun C.H."/>
            <person name="Eun M.Y."/>
        </authorList>
    </citation>
    <scope>NUCLEOTIDE SEQUENCE [MRNA]</scope>
    <source>
        <strain>cv. Milyang 23</strain>
        <tissue>Immature seed</tissue>
    </source>
</reference>
<reference key="3">
    <citation type="journal article" date="2005" name="PLoS Biol.">
        <title>The genomes of Oryza sativa: a history of duplications.</title>
        <authorList>
            <person name="Yu J."/>
            <person name="Wang J."/>
            <person name="Lin W."/>
            <person name="Li S."/>
            <person name="Li H."/>
            <person name="Zhou J."/>
            <person name="Ni P."/>
            <person name="Dong W."/>
            <person name="Hu S."/>
            <person name="Zeng C."/>
            <person name="Zhang J."/>
            <person name="Zhang Y."/>
            <person name="Li R."/>
            <person name="Xu Z."/>
            <person name="Li S."/>
            <person name="Li X."/>
            <person name="Zheng H."/>
            <person name="Cong L."/>
            <person name="Lin L."/>
            <person name="Yin J."/>
            <person name="Geng J."/>
            <person name="Li G."/>
            <person name="Shi J."/>
            <person name="Liu J."/>
            <person name="Lv H."/>
            <person name="Li J."/>
            <person name="Wang J."/>
            <person name="Deng Y."/>
            <person name="Ran L."/>
            <person name="Shi X."/>
            <person name="Wang X."/>
            <person name="Wu Q."/>
            <person name="Li C."/>
            <person name="Ren X."/>
            <person name="Wang J."/>
            <person name="Wang X."/>
            <person name="Li D."/>
            <person name="Liu D."/>
            <person name="Zhang X."/>
            <person name="Ji Z."/>
            <person name="Zhao W."/>
            <person name="Sun Y."/>
            <person name="Zhang Z."/>
            <person name="Bao J."/>
            <person name="Han Y."/>
            <person name="Dong L."/>
            <person name="Ji J."/>
            <person name="Chen P."/>
            <person name="Wu S."/>
            <person name="Liu J."/>
            <person name="Xiao Y."/>
            <person name="Bu D."/>
            <person name="Tan J."/>
            <person name="Yang L."/>
            <person name="Ye C."/>
            <person name="Zhang J."/>
            <person name="Xu J."/>
            <person name="Zhou Y."/>
            <person name="Yu Y."/>
            <person name="Zhang B."/>
            <person name="Zhuang S."/>
            <person name="Wei H."/>
            <person name="Liu B."/>
            <person name="Lei M."/>
            <person name="Yu H."/>
            <person name="Li Y."/>
            <person name="Xu H."/>
            <person name="Wei S."/>
            <person name="He X."/>
            <person name="Fang L."/>
            <person name="Zhang Z."/>
            <person name="Zhang Y."/>
            <person name="Huang X."/>
            <person name="Su Z."/>
            <person name="Tong W."/>
            <person name="Li J."/>
            <person name="Tong Z."/>
            <person name="Li S."/>
            <person name="Ye J."/>
            <person name="Wang L."/>
            <person name="Fang L."/>
            <person name="Lei T."/>
            <person name="Chen C.-S."/>
            <person name="Chen H.-C."/>
            <person name="Xu Z."/>
            <person name="Li H."/>
            <person name="Huang H."/>
            <person name="Zhang F."/>
            <person name="Xu H."/>
            <person name="Li N."/>
            <person name="Zhao C."/>
            <person name="Li S."/>
            <person name="Dong L."/>
            <person name="Huang Y."/>
            <person name="Li L."/>
            <person name="Xi Y."/>
            <person name="Qi Q."/>
            <person name="Li W."/>
            <person name="Zhang B."/>
            <person name="Hu W."/>
            <person name="Zhang Y."/>
            <person name="Tian X."/>
            <person name="Jiao Y."/>
            <person name="Liang X."/>
            <person name="Jin J."/>
            <person name="Gao L."/>
            <person name="Zheng W."/>
            <person name="Hao B."/>
            <person name="Liu S.-M."/>
            <person name="Wang W."/>
            <person name="Yuan L."/>
            <person name="Cao M."/>
            <person name="McDermott J."/>
            <person name="Samudrala R."/>
            <person name="Wang J."/>
            <person name="Wong G.K.-S."/>
            <person name="Yang H."/>
        </authorList>
    </citation>
    <scope>NUCLEOTIDE SEQUENCE [LARGE SCALE GENOMIC DNA]</scope>
    <source>
        <strain>cv. 93-11</strain>
    </source>
</reference>
<comment type="function">
    <text>Core component of nucleosome. Nucleosomes wrap and compact DNA into chromatin, limiting DNA accessibility to the cellular machineries which require DNA as a template. Histones thereby play a central role in transcription regulation, DNA repair, DNA replication and chromosomal stability. DNA accessibility is regulated via a complex set of post-translational modifications of histones, also called histone code, and nucleosome remodeling.</text>
</comment>
<comment type="subunit">
    <text>The nucleosome is a histone octamer containing two molecules each of H2A, H2B, H3 and H4 assembled in one H3-H4 heterotetramer and two H2A-H2B heterodimers. The octamer wraps approximately 147 bp of DNA.</text>
</comment>
<comment type="subcellular location">
    <subcellularLocation>
        <location evidence="1">Nucleus</location>
    </subcellularLocation>
    <subcellularLocation>
        <location evidence="1">Chromosome</location>
    </subcellularLocation>
</comment>
<comment type="PTM">
    <text evidence="1">Acetylation is generally linked to gene activation. Can be acetylated to form H3K9ac, H3K14ac, H3K18ac and H3K23ac. H3K9ac could compete with H3K9me and prevent gene silencing. H3K9ac is restricted to euchromatin (By similarity).</text>
</comment>
<comment type="PTM">
    <text evidence="1">Methylated to form mainly H3K4me, H3K9me, H3K18me, H3K23me, H3K27me and H3K36me. H3K4me1/2/3, H3K9me3, H3K27me3 and H3K36me1/2/3 are typical marks for euchromatin, whereas heterochromatic chromocenters are enriched in H3K9me1/2 and H3K27me1/2. H2BK143ub1 is probably prerequisite for H3K4me (By similarity).</text>
</comment>
<comment type="PTM">
    <text evidence="1">Can be phosphorylated to form H3S10ph, H3T11ph and H3S28ph.</text>
</comment>
<comment type="similarity">
    <text evidence="3">Belongs to the histone H3 family.</text>
</comment>
<comment type="caution">
    <text evidence="3">To ensure consistency between histone entries, we follow the 'Brno' nomenclature for histone modifications, with positions referring to those used in the literature for the 'closest' model organism. Due to slight variations in histone sequences between organisms and to the presence of initiator methionine in UniProtKB/Swiss-Prot sequences, the actual positions of modified amino acids in the sequence generally differ. In this entry the following conventions are used: H3K4me = methylated Lys-5; H3K9ac = acetylated Lys-10; H3K9me = methylated Lys-10; H3S10ph = phosphorylated Ser-11; H3T11ph = phosphorylated Thr-12; H3K14ac = acetylated Lys-15; H3K18ac = acetylated Lys-19; H3K18me = methylated Lys-19; H3K23ac = acetylated Lys-24; H3K23me = methylated Lys-24; H3K27me = methylated Lys-28; H3S28ph = phosphorylated Ser-29; H3K36me = methylated Lys-37.</text>
</comment>
<protein>
    <recommendedName>
        <fullName>Histone H3.2</fullName>
    </recommendedName>
</protein>
<organism>
    <name type="scientific">Oryza sativa subsp. indica</name>
    <name type="common">Rice</name>
    <dbReference type="NCBI Taxonomy" id="39946"/>
    <lineage>
        <taxon>Eukaryota</taxon>
        <taxon>Viridiplantae</taxon>
        <taxon>Streptophyta</taxon>
        <taxon>Embryophyta</taxon>
        <taxon>Tracheophyta</taxon>
        <taxon>Spermatophyta</taxon>
        <taxon>Magnoliopsida</taxon>
        <taxon>Liliopsida</taxon>
        <taxon>Poales</taxon>
        <taxon>Poaceae</taxon>
        <taxon>BOP clade</taxon>
        <taxon>Oryzoideae</taxon>
        <taxon>Oryzeae</taxon>
        <taxon>Oryzinae</taxon>
        <taxon>Oryza</taxon>
        <taxon>Oryza sativa</taxon>
    </lineage>
</organism>
<proteinExistence type="evidence at protein level"/>
<accession>A2Y533</accession>
<accession>P05203</accession>
<accession>P05329</accession>
<accession>P05330</accession>
<accession>P08860</accession>
<accession>P69247</accession>
<accession>Q53WV5</accession>
<accession>Q53WY3</accession>
<accession>Q7F4Z4</accession>
<name>H32_ORYSI</name>
<dbReference type="EMBL" id="U25664">
    <property type="protein sequence ID" value="AAA74190.1"/>
    <property type="molecule type" value="Genomic_DNA"/>
</dbReference>
<dbReference type="EMBL" id="U77296">
    <property type="protein sequence ID" value="AAB18816.1"/>
    <property type="molecule type" value="mRNA"/>
</dbReference>
<dbReference type="EMBL" id="CM000130">
    <property type="protein sequence ID" value="EAY98193.1"/>
    <property type="molecule type" value="Genomic_DNA"/>
</dbReference>
<dbReference type="EMBL" id="CM000131">
    <property type="protein sequence ID" value="EAY99776.1"/>
    <property type="molecule type" value="Genomic_DNA"/>
</dbReference>
<dbReference type="EMBL" id="CM000131">
    <property type="protein sequence ID" value="EAY99779.1"/>
    <property type="molecule type" value="Genomic_DNA"/>
</dbReference>
<dbReference type="EMBL" id="CM000136">
    <property type="protein sequence ID" value="EAY80005.1"/>
    <property type="molecule type" value="Genomic_DNA"/>
</dbReference>
<dbReference type="PDB" id="8Q15">
    <property type="method" value="EM"/>
    <property type="resolution" value="3.60 A"/>
    <property type="chains" value="E/F=1-136"/>
</dbReference>
<dbReference type="PDB" id="8Q16">
    <property type="method" value="EM"/>
    <property type="resolution" value="3.60 A"/>
    <property type="chains" value="E/F=1-136"/>
</dbReference>
<dbReference type="PDBsum" id="8Q15"/>
<dbReference type="PDBsum" id="8Q16"/>
<dbReference type="BMRB" id="A2Y533"/>
<dbReference type="EMDB" id="EMD-18060"/>
<dbReference type="EMDB" id="EMD-18061"/>
<dbReference type="SMR" id="A2Y533"/>
<dbReference type="STRING" id="39946.A2Y533"/>
<dbReference type="EnsemblPlants" id="BGIOSGA017977-TA">
    <property type="protein sequence ID" value="BGIOSGA017977-PA"/>
    <property type="gene ID" value="BGIOSGA017977"/>
</dbReference>
<dbReference type="EnsemblPlants" id="BGIOSGA021864-TA">
    <property type="protein sequence ID" value="BGIOSGA021864-PA"/>
    <property type="gene ID" value="BGIOSGA021864"/>
</dbReference>
<dbReference type="EnsemblPlants" id="BGIOSGA021865-TA">
    <property type="protein sequence ID" value="BGIOSGA021865-PA"/>
    <property type="gene ID" value="BGIOSGA021865"/>
</dbReference>
<dbReference type="EnsemblPlants" id="BGIOSGA022361-TA">
    <property type="protein sequence ID" value="BGIOSGA022361-PA"/>
    <property type="gene ID" value="BGIOSGA022361"/>
</dbReference>
<dbReference type="EnsemblPlants" id="BGIOSGA034470-TA">
    <property type="protein sequence ID" value="BGIOSGA034470-PA"/>
    <property type="gene ID" value="BGIOSGA034470"/>
</dbReference>
<dbReference type="EnsemblPlants" id="OsGoSa_01g0040660.01">
    <property type="protein sequence ID" value="OsGoSa_01g0040660.01"/>
    <property type="gene ID" value="OsGoSa_01g0040660"/>
</dbReference>
<dbReference type="EnsemblPlants" id="OsGoSa_04g0012690.01">
    <property type="protein sequence ID" value="OsGoSa_04g0012690.01"/>
    <property type="gene ID" value="OsGoSa_04g0012690"/>
</dbReference>
<dbReference type="EnsemblPlants" id="OsGoSa_05g0018560.01">
    <property type="protein sequence ID" value="OsGoSa_05g0018560.01"/>
    <property type="gene ID" value="OsGoSa_05g0018560"/>
</dbReference>
<dbReference type="EnsemblPlants" id="OsGoSa_06g0004290.01">
    <property type="protein sequence ID" value="OsGoSa_06g0004290.01"/>
    <property type="gene ID" value="OsGoSa_06g0004290"/>
</dbReference>
<dbReference type="EnsemblPlants" id="OsGoSa_06g0004300.01">
    <property type="protein sequence ID" value="OsGoSa_06g0004300.01"/>
    <property type="gene ID" value="OsGoSa_06g0004300"/>
</dbReference>
<dbReference type="EnsemblPlants" id="OsGoSa_06g0004310.01">
    <property type="protein sequence ID" value="OsGoSa_06g0004310.01"/>
    <property type="gene ID" value="OsGoSa_06g0004310"/>
</dbReference>
<dbReference type="EnsemblPlants" id="OsGoSa_11g0003820.01">
    <property type="protein sequence ID" value="OsGoSa_11g0003820.01"/>
    <property type="gene ID" value="OsGoSa_11g0003820"/>
</dbReference>
<dbReference type="EnsemblPlants" id="OsIR64_01g0040100.01">
    <property type="protein sequence ID" value="OsIR64_01g0040100.01"/>
    <property type="gene ID" value="OsIR64_01g0040100"/>
</dbReference>
<dbReference type="EnsemblPlants" id="OsIR64_04g0012490.01">
    <property type="protein sequence ID" value="OsIR64_04g0012490.01"/>
    <property type="gene ID" value="OsIR64_04g0012490"/>
</dbReference>
<dbReference type="EnsemblPlants" id="OsIR64_05g0018200.01">
    <property type="protein sequence ID" value="OsIR64_05g0018200.01"/>
    <property type="gene ID" value="OsIR64_05g0018200"/>
</dbReference>
<dbReference type="EnsemblPlants" id="OsIR64_06g0004140.01">
    <property type="protein sequence ID" value="OsIR64_06g0004140.01"/>
    <property type="gene ID" value="OsIR64_06g0004140"/>
</dbReference>
<dbReference type="EnsemblPlants" id="OsIR64_11g0003820.01">
    <property type="protein sequence ID" value="OsIR64_11g0003820.01"/>
    <property type="gene ID" value="OsIR64_11g0003820"/>
</dbReference>
<dbReference type="EnsemblPlants" id="OsKYG_01g0040410.01">
    <property type="protein sequence ID" value="OsKYG_01g0040410.01"/>
    <property type="gene ID" value="OsKYG_01g0040410"/>
</dbReference>
<dbReference type="EnsemblPlants" id="OsKYG_04g0012680.01">
    <property type="protein sequence ID" value="OsKYG_04g0012680.01"/>
    <property type="gene ID" value="OsKYG_04g0012680"/>
</dbReference>
<dbReference type="EnsemblPlants" id="OsKYG_05g0018440.01">
    <property type="protein sequence ID" value="OsKYG_05g0018440.01"/>
    <property type="gene ID" value="OsKYG_05g0018440"/>
</dbReference>
<dbReference type="EnsemblPlants" id="OsKYG_06g0004230.01">
    <property type="protein sequence ID" value="OsKYG_06g0004230.01"/>
    <property type="gene ID" value="OsKYG_06g0004230"/>
</dbReference>
<dbReference type="EnsemblPlants" id="OsKYG_11g0003820.01">
    <property type="protein sequence ID" value="OsKYG_11g0003820.01"/>
    <property type="gene ID" value="OsKYG_11g0003820"/>
</dbReference>
<dbReference type="EnsemblPlants" id="OsLaMu_01g0040470.01">
    <property type="protein sequence ID" value="OsLaMu_01g0040470.01"/>
    <property type="gene ID" value="OsLaMu_01g0040470"/>
</dbReference>
<dbReference type="EnsemblPlants" id="OsLaMu_04g0013480.01">
    <property type="protein sequence ID" value="OsLaMu_04g0013480.01"/>
    <property type="gene ID" value="OsLaMu_04g0013480"/>
</dbReference>
<dbReference type="EnsemblPlants" id="OsLaMu_05g0018620.01">
    <property type="protein sequence ID" value="OsLaMu_05g0018620.01"/>
    <property type="gene ID" value="OsLaMu_05g0018620"/>
</dbReference>
<dbReference type="EnsemblPlants" id="OsLaMu_06g0004140.01">
    <property type="protein sequence ID" value="OsLaMu_06g0004140.01"/>
    <property type="gene ID" value="OsLaMu_06g0004140"/>
</dbReference>
<dbReference type="EnsemblPlants" id="OsLaMu_06g0004150.01">
    <property type="protein sequence ID" value="OsLaMu_06g0004150.01"/>
    <property type="gene ID" value="OsLaMu_06g0004150"/>
</dbReference>
<dbReference type="EnsemblPlants" id="OsLaMu_06g0004160.01">
    <property type="protein sequence ID" value="OsLaMu_06g0004160.01"/>
    <property type="gene ID" value="OsLaMu_06g0004160"/>
</dbReference>
<dbReference type="EnsemblPlants" id="OsLaMu_11g0003850.01">
    <property type="protein sequence ID" value="OsLaMu_11g0003850.01"/>
    <property type="gene ID" value="OsLaMu_11g0003850"/>
</dbReference>
<dbReference type="EnsemblPlants" id="OsLima_01g0040440.01">
    <property type="protein sequence ID" value="OsLima_01g0040440.01"/>
    <property type="gene ID" value="OsLima_01g0040440"/>
</dbReference>
<dbReference type="EnsemblPlants" id="OsLima_04g0013090.01">
    <property type="protein sequence ID" value="OsLima_04g0013090.01"/>
    <property type="gene ID" value="OsLima_04g0013090"/>
</dbReference>
<dbReference type="EnsemblPlants" id="OsLima_05g0018500.01">
    <property type="protein sequence ID" value="OsLima_05g0018500.01"/>
    <property type="gene ID" value="OsLima_05g0018500"/>
</dbReference>
<dbReference type="EnsemblPlants" id="OsLima_06g0004380.01">
    <property type="protein sequence ID" value="OsLima_06g0004380.01"/>
    <property type="gene ID" value="OsLima_06g0004380"/>
</dbReference>
<dbReference type="EnsemblPlants" id="OsLima_06g0004390.01">
    <property type="protein sequence ID" value="OsLima_06g0004390.01"/>
    <property type="gene ID" value="OsLima_06g0004390"/>
</dbReference>
<dbReference type="EnsemblPlants" id="OsLima_06g0004400.01">
    <property type="protein sequence ID" value="OsLima_06g0004400.01"/>
    <property type="gene ID" value="OsLima_06g0004400"/>
</dbReference>
<dbReference type="EnsemblPlants" id="OsLima_11g0003740.01">
    <property type="protein sequence ID" value="OsLima_11g0003740.01"/>
    <property type="gene ID" value="OsLima_11g0003740"/>
</dbReference>
<dbReference type="EnsemblPlants" id="OsLiXu_01g0040610.01">
    <property type="protein sequence ID" value="OsLiXu_01g0040610.01"/>
    <property type="gene ID" value="OsLiXu_01g0040610"/>
</dbReference>
<dbReference type="EnsemblPlants" id="OsLiXu_04g0013260.01">
    <property type="protein sequence ID" value="OsLiXu_04g0013260.01"/>
    <property type="gene ID" value="OsLiXu_04g0013260"/>
</dbReference>
<dbReference type="EnsemblPlants" id="OsLiXu_05g0018630.01">
    <property type="protein sequence ID" value="OsLiXu_05g0018630.01"/>
    <property type="gene ID" value="OsLiXu_05g0018630"/>
</dbReference>
<dbReference type="EnsemblPlants" id="OsLiXu_06g0004260.01">
    <property type="protein sequence ID" value="OsLiXu_06g0004260.01"/>
    <property type="gene ID" value="OsLiXu_06g0004260"/>
</dbReference>
<dbReference type="EnsemblPlants" id="OsLiXu_11g0003750.01">
    <property type="protein sequence ID" value="OsLiXu_11g0003750.01"/>
    <property type="gene ID" value="OsLiXu_11g0003750"/>
</dbReference>
<dbReference type="EnsemblPlants" id="OsLiXu_Ung0026740.01">
    <property type="protein sequence ID" value="OsLiXu_Ung0026740.01"/>
    <property type="gene ID" value="OsLiXu_Ung0026740"/>
</dbReference>
<dbReference type="EnsemblPlants" id="OsLiXu_Ung0075010.01">
    <property type="protein sequence ID" value="OsLiXu_Ung0075010.01"/>
    <property type="gene ID" value="OsLiXu_Ung0075010"/>
</dbReference>
<dbReference type="EnsemblPlants" id="OsLiXu_Ung0075020.01">
    <property type="protein sequence ID" value="OsLiXu_Ung0075020.01"/>
    <property type="gene ID" value="OsLiXu_Ung0075020"/>
</dbReference>
<dbReference type="EnsemblPlants" id="OsMH63_01G041280_01">
    <property type="protein sequence ID" value="OsMH63_01G041280_01"/>
    <property type="gene ID" value="OsMH63_01G041280"/>
</dbReference>
<dbReference type="EnsemblPlants" id="OsMH63_04G013570_01">
    <property type="protein sequence ID" value="OsMH63_04G013570_01"/>
    <property type="gene ID" value="OsMH63_04G013570"/>
</dbReference>
<dbReference type="EnsemblPlants" id="OsMH63_05G018570_01">
    <property type="protein sequence ID" value="OsMH63_05G018570_01"/>
    <property type="gene ID" value="OsMH63_05G018570"/>
</dbReference>
<dbReference type="EnsemblPlants" id="OsMH63_11G003890_01">
    <property type="protein sequence ID" value="OsMH63_11G003890_01"/>
    <property type="gene ID" value="OsMH63_11G003890"/>
</dbReference>
<dbReference type="EnsemblPlants" id="OsPr106_01g0040430.01">
    <property type="protein sequence ID" value="OsPr106_01g0040430.01"/>
    <property type="gene ID" value="OsPr106_01g0040430"/>
</dbReference>
<dbReference type="EnsemblPlants" id="OsPr106_04g0013580.01">
    <property type="protein sequence ID" value="OsPr106_04g0013580.01"/>
    <property type="gene ID" value="OsPr106_04g0013580"/>
</dbReference>
<dbReference type="EnsemblPlants" id="OsPr106_05g0018680.01">
    <property type="protein sequence ID" value="OsPr106_05g0018680.01"/>
    <property type="gene ID" value="OsPr106_05g0018680"/>
</dbReference>
<dbReference type="EnsemblPlants" id="OsPr106_11g0003730.01">
    <property type="protein sequence ID" value="OsPr106_11g0003730.01"/>
    <property type="gene ID" value="OsPr106_11g0003730"/>
</dbReference>
<dbReference type="EnsemblPlants" id="OsZS97_01G040620_01">
    <property type="protein sequence ID" value="OsZS97_01G040620_01"/>
    <property type="gene ID" value="OsZS97_01G040620"/>
</dbReference>
<dbReference type="EnsemblPlants" id="OsZS97_04G013650_01">
    <property type="protein sequence ID" value="OsZS97_04G013650_01"/>
    <property type="gene ID" value="OsZS97_04G013650"/>
</dbReference>
<dbReference type="EnsemblPlants" id="OsZS97_05G018800_01">
    <property type="protein sequence ID" value="OsZS97_05G018800_01"/>
    <property type="gene ID" value="OsZS97_05G018800"/>
</dbReference>
<dbReference type="EnsemblPlants" id="OsZS97_06G004220_01">
    <property type="protein sequence ID" value="OsZS97_06G004220_01"/>
    <property type="gene ID" value="OsZS97_06G004220"/>
</dbReference>
<dbReference type="EnsemblPlants" id="OsZS97_06G004230_01">
    <property type="protein sequence ID" value="OsZS97_06G004230_01"/>
    <property type="gene ID" value="OsZS97_06G004230"/>
</dbReference>
<dbReference type="EnsemblPlants" id="OsZS97_06G004240_01">
    <property type="protein sequence ID" value="OsZS97_06G004240_01"/>
    <property type="gene ID" value="OsZS97_06G004240"/>
</dbReference>
<dbReference type="EnsemblPlants" id="OsZS97_11G003790_01">
    <property type="protein sequence ID" value="OsZS97_11G003790_01"/>
    <property type="gene ID" value="OsZS97_11G003790"/>
</dbReference>
<dbReference type="Gramene" id="BGIOSGA017977-TA">
    <property type="protein sequence ID" value="BGIOSGA017977-PA"/>
    <property type="gene ID" value="BGIOSGA017977"/>
</dbReference>
<dbReference type="Gramene" id="BGIOSGA021864-TA">
    <property type="protein sequence ID" value="BGIOSGA021864-PA"/>
    <property type="gene ID" value="BGIOSGA021864"/>
</dbReference>
<dbReference type="Gramene" id="BGIOSGA021865-TA">
    <property type="protein sequence ID" value="BGIOSGA021865-PA"/>
    <property type="gene ID" value="BGIOSGA021865"/>
</dbReference>
<dbReference type="Gramene" id="BGIOSGA022361-TA">
    <property type="protein sequence ID" value="BGIOSGA022361-PA"/>
    <property type="gene ID" value="BGIOSGA022361"/>
</dbReference>
<dbReference type="Gramene" id="BGIOSGA034470-TA">
    <property type="protein sequence ID" value="BGIOSGA034470-PA"/>
    <property type="gene ID" value="BGIOSGA034470"/>
</dbReference>
<dbReference type="Gramene" id="OsGoSa_01g0040660.01">
    <property type="protein sequence ID" value="OsGoSa_01g0040660.01"/>
    <property type="gene ID" value="OsGoSa_01g0040660"/>
</dbReference>
<dbReference type="Gramene" id="OsGoSa_04g0012690.01">
    <property type="protein sequence ID" value="OsGoSa_04g0012690.01"/>
    <property type="gene ID" value="OsGoSa_04g0012690"/>
</dbReference>
<dbReference type="Gramene" id="OsGoSa_05g0018560.01">
    <property type="protein sequence ID" value="OsGoSa_05g0018560.01"/>
    <property type="gene ID" value="OsGoSa_05g0018560"/>
</dbReference>
<dbReference type="Gramene" id="OsGoSa_06g0004290.01">
    <property type="protein sequence ID" value="OsGoSa_06g0004290.01"/>
    <property type="gene ID" value="OsGoSa_06g0004290"/>
</dbReference>
<dbReference type="Gramene" id="OsGoSa_06g0004300.01">
    <property type="protein sequence ID" value="OsGoSa_06g0004300.01"/>
    <property type="gene ID" value="OsGoSa_06g0004300"/>
</dbReference>
<dbReference type="Gramene" id="OsGoSa_06g0004310.01">
    <property type="protein sequence ID" value="OsGoSa_06g0004310.01"/>
    <property type="gene ID" value="OsGoSa_06g0004310"/>
</dbReference>
<dbReference type="Gramene" id="OsGoSa_11g0003820.01">
    <property type="protein sequence ID" value="OsGoSa_11g0003820.01"/>
    <property type="gene ID" value="OsGoSa_11g0003820"/>
</dbReference>
<dbReference type="Gramene" id="OsIR64_01g0040100.01">
    <property type="protein sequence ID" value="OsIR64_01g0040100.01"/>
    <property type="gene ID" value="OsIR64_01g0040100"/>
</dbReference>
<dbReference type="Gramene" id="OsIR64_04g0012490.01">
    <property type="protein sequence ID" value="OsIR64_04g0012490.01"/>
    <property type="gene ID" value="OsIR64_04g0012490"/>
</dbReference>
<dbReference type="Gramene" id="OsIR64_05g0018200.01">
    <property type="protein sequence ID" value="OsIR64_05g0018200.01"/>
    <property type="gene ID" value="OsIR64_05g0018200"/>
</dbReference>
<dbReference type="Gramene" id="OsIR64_06g0004140.01">
    <property type="protein sequence ID" value="OsIR64_06g0004140.01"/>
    <property type="gene ID" value="OsIR64_06g0004140"/>
</dbReference>
<dbReference type="Gramene" id="OsIR64_11g0003820.01">
    <property type="protein sequence ID" value="OsIR64_11g0003820.01"/>
    <property type="gene ID" value="OsIR64_11g0003820"/>
</dbReference>
<dbReference type="Gramene" id="OsKYG_01g0040410.01">
    <property type="protein sequence ID" value="OsKYG_01g0040410.01"/>
    <property type="gene ID" value="OsKYG_01g0040410"/>
</dbReference>
<dbReference type="Gramene" id="OsKYG_04g0012680.01">
    <property type="protein sequence ID" value="OsKYG_04g0012680.01"/>
    <property type="gene ID" value="OsKYG_04g0012680"/>
</dbReference>
<dbReference type="Gramene" id="OsKYG_05g0018440.01">
    <property type="protein sequence ID" value="OsKYG_05g0018440.01"/>
    <property type="gene ID" value="OsKYG_05g0018440"/>
</dbReference>
<dbReference type="Gramene" id="OsKYG_06g0004230.01">
    <property type="protein sequence ID" value="OsKYG_06g0004230.01"/>
    <property type="gene ID" value="OsKYG_06g0004230"/>
</dbReference>
<dbReference type="Gramene" id="OsKYG_11g0003820.01">
    <property type="protein sequence ID" value="OsKYG_11g0003820.01"/>
    <property type="gene ID" value="OsKYG_11g0003820"/>
</dbReference>
<dbReference type="Gramene" id="OsLaMu_01g0040470.01">
    <property type="protein sequence ID" value="OsLaMu_01g0040470.01"/>
    <property type="gene ID" value="OsLaMu_01g0040470"/>
</dbReference>
<dbReference type="Gramene" id="OsLaMu_04g0013480.01">
    <property type="protein sequence ID" value="OsLaMu_04g0013480.01"/>
    <property type="gene ID" value="OsLaMu_04g0013480"/>
</dbReference>
<dbReference type="Gramene" id="OsLaMu_05g0018620.01">
    <property type="protein sequence ID" value="OsLaMu_05g0018620.01"/>
    <property type="gene ID" value="OsLaMu_05g0018620"/>
</dbReference>
<dbReference type="Gramene" id="OsLaMu_06g0004140.01">
    <property type="protein sequence ID" value="OsLaMu_06g0004140.01"/>
    <property type="gene ID" value="OsLaMu_06g0004140"/>
</dbReference>
<dbReference type="Gramene" id="OsLaMu_06g0004150.01">
    <property type="protein sequence ID" value="OsLaMu_06g0004150.01"/>
    <property type="gene ID" value="OsLaMu_06g0004150"/>
</dbReference>
<dbReference type="Gramene" id="OsLaMu_06g0004160.01">
    <property type="protein sequence ID" value="OsLaMu_06g0004160.01"/>
    <property type="gene ID" value="OsLaMu_06g0004160"/>
</dbReference>
<dbReference type="Gramene" id="OsLaMu_11g0003850.01">
    <property type="protein sequence ID" value="OsLaMu_11g0003850.01"/>
    <property type="gene ID" value="OsLaMu_11g0003850"/>
</dbReference>
<dbReference type="Gramene" id="OsLima_01g0040440.01">
    <property type="protein sequence ID" value="OsLima_01g0040440.01"/>
    <property type="gene ID" value="OsLima_01g0040440"/>
</dbReference>
<dbReference type="Gramene" id="OsLima_04g0013090.01">
    <property type="protein sequence ID" value="OsLima_04g0013090.01"/>
    <property type="gene ID" value="OsLima_04g0013090"/>
</dbReference>
<dbReference type="Gramene" id="OsLima_05g0018500.01">
    <property type="protein sequence ID" value="OsLima_05g0018500.01"/>
    <property type="gene ID" value="OsLima_05g0018500"/>
</dbReference>
<dbReference type="Gramene" id="OsLima_06g0004380.01">
    <property type="protein sequence ID" value="OsLima_06g0004380.01"/>
    <property type="gene ID" value="OsLima_06g0004380"/>
</dbReference>
<dbReference type="Gramene" id="OsLima_06g0004390.01">
    <property type="protein sequence ID" value="OsLima_06g0004390.01"/>
    <property type="gene ID" value="OsLima_06g0004390"/>
</dbReference>
<dbReference type="Gramene" id="OsLima_06g0004400.01">
    <property type="protein sequence ID" value="OsLima_06g0004400.01"/>
    <property type="gene ID" value="OsLima_06g0004400"/>
</dbReference>
<dbReference type="Gramene" id="OsLima_11g0003740.01">
    <property type="protein sequence ID" value="OsLima_11g0003740.01"/>
    <property type="gene ID" value="OsLima_11g0003740"/>
</dbReference>
<dbReference type="Gramene" id="OsLiXu_01g0040610.01">
    <property type="protein sequence ID" value="OsLiXu_01g0040610.01"/>
    <property type="gene ID" value="OsLiXu_01g0040610"/>
</dbReference>
<dbReference type="Gramene" id="OsLiXu_04g0013260.01">
    <property type="protein sequence ID" value="OsLiXu_04g0013260.01"/>
    <property type="gene ID" value="OsLiXu_04g0013260"/>
</dbReference>
<dbReference type="Gramene" id="OsLiXu_05g0018630.01">
    <property type="protein sequence ID" value="OsLiXu_05g0018630.01"/>
    <property type="gene ID" value="OsLiXu_05g0018630"/>
</dbReference>
<dbReference type="Gramene" id="OsLiXu_06g0004260.01">
    <property type="protein sequence ID" value="OsLiXu_06g0004260.01"/>
    <property type="gene ID" value="OsLiXu_06g0004260"/>
</dbReference>
<dbReference type="Gramene" id="OsLiXu_11g0003750.01">
    <property type="protein sequence ID" value="OsLiXu_11g0003750.01"/>
    <property type="gene ID" value="OsLiXu_11g0003750"/>
</dbReference>
<dbReference type="Gramene" id="OsLiXu_Ung0026740.01">
    <property type="protein sequence ID" value="OsLiXu_Ung0026740.01"/>
    <property type="gene ID" value="OsLiXu_Ung0026740"/>
</dbReference>
<dbReference type="Gramene" id="OsLiXu_Ung0075010.01">
    <property type="protein sequence ID" value="OsLiXu_Ung0075010.01"/>
    <property type="gene ID" value="OsLiXu_Ung0075010"/>
</dbReference>
<dbReference type="Gramene" id="OsLiXu_Ung0075020.01">
    <property type="protein sequence ID" value="OsLiXu_Ung0075020.01"/>
    <property type="gene ID" value="OsLiXu_Ung0075020"/>
</dbReference>
<dbReference type="Gramene" id="OsMH63_01G041280_01">
    <property type="protein sequence ID" value="OsMH63_01G041280_01"/>
    <property type="gene ID" value="OsMH63_01G041280"/>
</dbReference>
<dbReference type="Gramene" id="OsMH63_04G013570_01">
    <property type="protein sequence ID" value="OsMH63_04G013570_01"/>
    <property type="gene ID" value="OsMH63_04G013570"/>
</dbReference>
<dbReference type="Gramene" id="OsMH63_05G018570_01">
    <property type="protein sequence ID" value="OsMH63_05G018570_01"/>
    <property type="gene ID" value="OsMH63_05G018570"/>
</dbReference>
<dbReference type="Gramene" id="OsMH63_11G003890_01">
    <property type="protein sequence ID" value="OsMH63_11G003890_01"/>
    <property type="gene ID" value="OsMH63_11G003890"/>
</dbReference>
<dbReference type="Gramene" id="OsPr106_01g0040430.01">
    <property type="protein sequence ID" value="OsPr106_01g0040430.01"/>
    <property type="gene ID" value="OsPr106_01g0040430"/>
</dbReference>
<dbReference type="Gramene" id="OsPr106_04g0013580.01">
    <property type="protein sequence ID" value="OsPr106_04g0013580.01"/>
    <property type="gene ID" value="OsPr106_04g0013580"/>
</dbReference>
<dbReference type="Gramene" id="OsPr106_05g0018680.01">
    <property type="protein sequence ID" value="OsPr106_05g0018680.01"/>
    <property type="gene ID" value="OsPr106_05g0018680"/>
</dbReference>
<dbReference type="Gramene" id="OsPr106_11g0003730.01">
    <property type="protein sequence ID" value="OsPr106_11g0003730.01"/>
    <property type="gene ID" value="OsPr106_11g0003730"/>
</dbReference>
<dbReference type="Gramene" id="OsZS97_01G040620_01">
    <property type="protein sequence ID" value="OsZS97_01G040620_01"/>
    <property type="gene ID" value="OsZS97_01G040620"/>
</dbReference>
<dbReference type="Gramene" id="OsZS97_04G013650_01">
    <property type="protein sequence ID" value="OsZS97_04G013650_01"/>
    <property type="gene ID" value="OsZS97_04G013650"/>
</dbReference>
<dbReference type="Gramene" id="OsZS97_05G018800_01">
    <property type="protein sequence ID" value="OsZS97_05G018800_01"/>
    <property type="gene ID" value="OsZS97_05G018800"/>
</dbReference>
<dbReference type="Gramene" id="OsZS97_06G004220_01">
    <property type="protein sequence ID" value="OsZS97_06G004220_01"/>
    <property type="gene ID" value="OsZS97_06G004220"/>
</dbReference>
<dbReference type="Gramene" id="OsZS97_06G004230_01">
    <property type="protein sequence ID" value="OsZS97_06G004230_01"/>
    <property type="gene ID" value="OsZS97_06G004230"/>
</dbReference>
<dbReference type="Gramene" id="OsZS97_06G004240_01">
    <property type="protein sequence ID" value="OsZS97_06G004240_01"/>
    <property type="gene ID" value="OsZS97_06G004240"/>
</dbReference>
<dbReference type="Gramene" id="OsZS97_11G003790_01">
    <property type="protein sequence ID" value="OsZS97_11G003790_01"/>
    <property type="gene ID" value="OsZS97_11G003790"/>
</dbReference>
<dbReference type="HOGENOM" id="CLU_078295_4_0_1"/>
<dbReference type="OMA" id="ANDCAIH"/>
<dbReference type="OrthoDB" id="652632at2759"/>
<dbReference type="Proteomes" id="UP000007015">
    <property type="component" value="Chromosome 11"/>
</dbReference>
<dbReference type="Proteomes" id="UP000007015">
    <property type="component" value="Chromosome 5"/>
</dbReference>
<dbReference type="Proteomes" id="UP000007015">
    <property type="component" value="Chromosome 6"/>
</dbReference>
<dbReference type="ExpressionAtlas" id="A2Y533">
    <property type="expression patterns" value="differential"/>
</dbReference>
<dbReference type="GO" id="GO:0010369">
    <property type="term" value="C:chromocenter"/>
    <property type="evidence" value="ECO:0007669"/>
    <property type="project" value="EnsemblPlants"/>
</dbReference>
<dbReference type="GO" id="GO:0000786">
    <property type="term" value="C:nucleosome"/>
    <property type="evidence" value="ECO:0007669"/>
    <property type="project" value="UniProtKB-KW"/>
</dbReference>
<dbReference type="GO" id="GO:0005634">
    <property type="term" value="C:nucleus"/>
    <property type="evidence" value="ECO:0007669"/>
    <property type="project" value="UniProtKB-SubCell"/>
</dbReference>
<dbReference type="GO" id="GO:0003677">
    <property type="term" value="F:DNA binding"/>
    <property type="evidence" value="ECO:0007669"/>
    <property type="project" value="UniProtKB-KW"/>
</dbReference>
<dbReference type="GO" id="GO:0046982">
    <property type="term" value="F:protein heterodimerization activity"/>
    <property type="evidence" value="ECO:0007669"/>
    <property type="project" value="InterPro"/>
</dbReference>
<dbReference type="GO" id="GO:0030527">
    <property type="term" value="F:structural constituent of chromatin"/>
    <property type="evidence" value="ECO:0007669"/>
    <property type="project" value="InterPro"/>
</dbReference>
<dbReference type="CDD" id="cd22911">
    <property type="entry name" value="HFD_H3"/>
    <property type="match status" value="1"/>
</dbReference>
<dbReference type="FunFam" id="1.10.20.10:FF:000078">
    <property type="entry name" value="Histone H3"/>
    <property type="match status" value="1"/>
</dbReference>
<dbReference type="FunFam" id="1.10.20.10:FF:000044">
    <property type="entry name" value="Histone H3.3"/>
    <property type="match status" value="1"/>
</dbReference>
<dbReference type="Gene3D" id="1.10.20.10">
    <property type="entry name" value="Histone, subunit A"/>
    <property type="match status" value="1"/>
</dbReference>
<dbReference type="InterPro" id="IPR009072">
    <property type="entry name" value="Histone-fold"/>
</dbReference>
<dbReference type="InterPro" id="IPR007125">
    <property type="entry name" value="Histone_H2A/H2B/H3"/>
</dbReference>
<dbReference type="InterPro" id="IPR000164">
    <property type="entry name" value="Histone_H3/CENP-A"/>
</dbReference>
<dbReference type="PANTHER" id="PTHR11426">
    <property type="entry name" value="HISTONE H3"/>
    <property type="match status" value="1"/>
</dbReference>
<dbReference type="Pfam" id="PF00125">
    <property type="entry name" value="Histone"/>
    <property type="match status" value="1"/>
</dbReference>
<dbReference type="PRINTS" id="PR00622">
    <property type="entry name" value="HISTONEH3"/>
</dbReference>
<dbReference type="SMART" id="SM00428">
    <property type="entry name" value="H3"/>
    <property type="match status" value="1"/>
</dbReference>
<dbReference type="SUPFAM" id="SSF47113">
    <property type="entry name" value="Histone-fold"/>
    <property type="match status" value="1"/>
</dbReference>
<dbReference type="PROSITE" id="PS00322">
    <property type="entry name" value="HISTONE_H3_1"/>
    <property type="match status" value="1"/>
</dbReference>
<dbReference type="PROSITE" id="PS00959">
    <property type="entry name" value="HISTONE_H3_2"/>
    <property type="match status" value="1"/>
</dbReference>
<evidence type="ECO:0000250" key="1"/>
<evidence type="ECO:0000256" key="2">
    <source>
        <dbReference type="SAM" id="MobiDB-lite"/>
    </source>
</evidence>
<evidence type="ECO:0000305" key="3"/>
<feature type="initiator methionine" description="Removed" evidence="1">
    <location>
        <position position="1"/>
    </location>
</feature>
<feature type="chain" id="PRO_0000295654" description="Histone H3.2">
    <location>
        <begin position="2"/>
        <end position="136"/>
    </location>
</feature>
<feature type="region of interest" description="Disordered" evidence="2">
    <location>
        <begin position="1"/>
        <end position="43"/>
    </location>
</feature>
<feature type="modified residue" description="N6-methylated lysine" evidence="1">
    <location>
        <position position="5"/>
    </location>
</feature>
<feature type="modified residue" description="N6-acetyllysine; alternate" evidence="1">
    <location>
        <position position="10"/>
    </location>
</feature>
<feature type="modified residue" description="N6-methylated lysine; alternate" evidence="1">
    <location>
        <position position="10"/>
    </location>
</feature>
<feature type="modified residue" description="Phosphoserine" evidence="1">
    <location>
        <position position="11"/>
    </location>
</feature>
<feature type="modified residue" description="Phosphothreonine" evidence="1">
    <location>
        <position position="12"/>
    </location>
</feature>
<feature type="modified residue" description="N6-acetyllysine" evidence="1">
    <location>
        <position position="15"/>
    </location>
</feature>
<feature type="modified residue" description="N6-acetyllysine; alternate" evidence="1">
    <location>
        <position position="19"/>
    </location>
</feature>
<feature type="modified residue" description="N6-methylated lysine; alternate" evidence="1">
    <location>
        <position position="19"/>
    </location>
</feature>
<feature type="modified residue" description="N6-acetyllysine; alternate" evidence="1">
    <location>
        <position position="24"/>
    </location>
</feature>
<feature type="modified residue" description="N6-methylated lysine; alternate" evidence="1">
    <location>
        <position position="24"/>
    </location>
</feature>
<feature type="modified residue" description="N6-methylated lysine" evidence="1">
    <location>
        <position position="28"/>
    </location>
</feature>
<feature type="modified residue" description="Phosphoserine" evidence="1">
    <location>
        <position position="29"/>
    </location>
</feature>
<feature type="modified residue" description="N6-methylated lysine" evidence="1">
    <location>
        <position position="37"/>
    </location>
</feature>
<feature type="sequence conflict" description="In Ref. 1; AAA74190." evidence="3" ref="1">
    <original>S</original>
    <variation>T</variation>
    <location>
        <position position="87"/>
    </location>
</feature>
<feature type="sequence conflict" description="In Ref. 1; AAA74190." evidence="3" ref="1">
    <original>A</original>
    <variation>R</variation>
    <location>
        <position position="91"/>
    </location>
</feature>
<feature type="sequence conflict" description="In Ref. 1; AAA74190." evidence="3" ref="1">
    <original>A</original>
    <variation>R</variation>
    <location>
        <position position="99"/>
    </location>
</feature>